<protein>
    <recommendedName>
        <fullName evidence="2">Zinc finger protein 830</fullName>
    </recommendedName>
    <alternativeName>
        <fullName evidence="2">Coiled-coil domain-containing protein 16</fullName>
    </alternativeName>
</protein>
<proteinExistence type="evidence at transcript level"/>
<gene>
    <name evidence="2" type="primary">znf830</name>
    <name evidence="2" type="synonym">ccdc16</name>
    <name type="ORF">zgc:77398</name>
</gene>
<keyword id="KW-0131">Cell cycle</keyword>
<keyword id="KW-0132">Cell division</keyword>
<keyword id="KW-0158">Chromosome</keyword>
<keyword id="KW-0175">Coiled coil</keyword>
<keyword id="KW-0217">Developmental protein</keyword>
<keyword id="KW-0479">Metal-binding</keyword>
<keyword id="KW-0498">Mitosis</keyword>
<keyword id="KW-0539">Nucleus</keyword>
<keyword id="KW-1185">Reference proteome</keyword>
<keyword id="KW-0862">Zinc</keyword>
<keyword id="KW-0863">Zinc-finger</keyword>
<accession>Q6P0I6</accession>
<name>ZN830_DANRE</name>
<comment type="function">
    <text evidence="1">May act as an important regulator of the cell cycle that participates in the maintenance of genome integrity.</text>
</comment>
<comment type="subcellular location">
    <subcellularLocation>
        <location evidence="1">Nucleus</location>
    </subcellularLocation>
    <subcellularLocation>
        <location evidence="1">Chromosome</location>
    </subcellularLocation>
    <subcellularLocation>
        <location evidence="1">Nucleus speckle</location>
    </subcellularLocation>
    <text evidence="1">Excluded from nucleolus.</text>
</comment>
<organism>
    <name type="scientific">Danio rerio</name>
    <name type="common">Zebrafish</name>
    <name type="synonym">Brachydanio rerio</name>
    <dbReference type="NCBI Taxonomy" id="7955"/>
    <lineage>
        <taxon>Eukaryota</taxon>
        <taxon>Metazoa</taxon>
        <taxon>Chordata</taxon>
        <taxon>Craniata</taxon>
        <taxon>Vertebrata</taxon>
        <taxon>Euteleostomi</taxon>
        <taxon>Actinopterygii</taxon>
        <taxon>Neopterygii</taxon>
        <taxon>Teleostei</taxon>
        <taxon>Ostariophysi</taxon>
        <taxon>Cypriniformes</taxon>
        <taxon>Danionidae</taxon>
        <taxon>Danioninae</taxon>
        <taxon>Danio</taxon>
    </lineage>
</organism>
<reference key="1">
    <citation type="submission" date="2004-01" db="EMBL/GenBank/DDBJ databases">
        <authorList>
            <consortium name="NIH - Zebrafish Gene Collection (ZGC) project"/>
        </authorList>
    </citation>
    <scope>NUCLEOTIDE SEQUENCE [LARGE SCALE MRNA]</scope>
    <source>
        <tissue>Embryo</tissue>
    </source>
</reference>
<sequence>MAASRKGKAVKAVKQEDLRRLMQETRRDSGRQKRVESPFARYSGAGQLMCALCDAPVKNALLWQTHVLGKQHKDKLQELKSRTAPAHTPAPAHTPAHTPAAASSSSSTLKRAAEPPPAPGKRAKLQTGAGAGLGLLAGHYDDDDDDEGGAGERKTAPPTDSALPADFFDSGPAPAPPISHSGSVSKAEQQESQEPPENRPESLPEGFFDDPVRDAQVRQVDTPKDQLEREWEEFQKEMRQVNSASDAIVAEDDEEGRLERQMDEIEEQMQCLRRVEELRAKQETARSRRRSQRREEEPMQEEEPLEEEEELMHILTQDWRAKGALA</sequence>
<dbReference type="EMBL" id="BC065604">
    <property type="protein sequence ID" value="AAH65604.1"/>
    <property type="molecule type" value="mRNA"/>
</dbReference>
<dbReference type="RefSeq" id="NP_991227.1">
    <property type="nucleotide sequence ID" value="NM_205664.1"/>
</dbReference>
<dbReference type="SMR" id="Q6P0I6"/>
<dbReference type="FunCoup" id="Q6P0I6">
    <property type="interactions" value="1506"/>
</dbReference>
<dbReference type="GeneID" id="402963"/>
<dbReference type="KEGG" id="dre:402963"/>
<dbReference type="AGR" id="ZFIN:ZDB-GENE-040426-1834"/>
<dbReference type="ZFIN" id="ZDB-GENE-040426-1834">
    <property type="gene designation" value="zgc:77398"/>
</dbReference>
<dbReference type="InParanoid" id="Q6P0I6"/>
<dbReference type="OrthoDB" id="77607at2759"/>
<dbReference type="PhylomeDB" id="Q6P0I6"/>
<dbReference type="PRO" id="PR:Q6P0I6"/>
<dbReference type="Proteomes" id="UP000000437">
    <property type="component" value="Unplaced"/>
</dbReference>
<dbReference type="GO" id="GO:0005694">
    <property type="term" value="C:chromosome"/>
    <property type="evidence" value="ECO:0007669"/>
    <property type="project" value="UniProtKB-SubCell"/>
</dbReference>
<dbReference type="GO" id="GO:0016607">
    <property type="term" value="C:nuclear speck"/>
    <property type="evidence" value="ECO:0007669"/>
    <property type="project" value="UniProtKB-SubCell"/>
</dbReference>
<dbReference type="GO" id="GO:0005634">
    <property type="term" value="C:nucleus"/>
    <property type="evidence" value="ECO:0000318"/>
    <property type="project" value="GO_Central"/>
</dbReference>
<dbReference type="GO" id="GO:0005681">
    <property type="term" value="C:spliceosomal complex"/>
    <property type="evidence" value="ECO:0007669"/>
    <property type="project" value="InterPro"/>
</dbReference>
<dbReference type="GO" id="GO:0003676">
    <property type="term" value="F:nucleic acid binding"/>
    <property type="evidence" value="ECO:0007669"/>
    <property type="project" value="InterPro"/>
</dbReference>
<dbReference type="GO" id="GO:0008270">
    <property type="term" value="F:zinc ion binding"/>
    <property type="evidence" value="ECO:0007669"/>
    <property type="project" value="UniProtKB-KW"/>
</dbReference>
<dbReference type="GO" id="GO:0051301">
    <property type="term" value="P:cell division"/>
    <property type="evidence" value="ECO:0007669"/>
    <property type="project" value="UniProtKB-KW"/>
</dbReference>
<dbReference type="GO" id="GO:0044773">
    <property type="term" value="P:mitotic DNA damage checkpoint signaling"/>
    <property type="evidence" value="ECO:0000318"/>
    <property type="project" value="GO_Central"/>
</dbReference>
<dbReference type="GO" id="GO:0033314">
    <property type="term" value="P:mitotic DNA replication checkpoint signaling"/>
    <property type="evidence" value="ECO:0000318"/>
    <property type="project" value="GO_Central"/>
</dbReference>
<dbReference type="GO" id="GO:0033260">
    <property type="term" value="P:nuclear DNA replication"/>
    <property type="evidence" value="ECO:0000318"/>
    <property type="project" value="GO_Central"/>
</dbReference>
<dbReference type="Gene3D" id="3.30.160.60">
    <property type="entry name" value="Classic Zinc Finger"/>
    <property type="match status" value="1"/>
</dbReference>
<dbReference type="InterPro" id="IPR003604">
    <property type="entry name" value="Matrin/U1-like-C_Znf_C2H2"/>
</dbReference>
<dbReference type="InterPro" id="IPR040050">
    <property type="entry name" value="ZNF830-like"/>
</dbReference>
<dbReference type="InterPro" id="IPR022755">
    <property type="entry name" value="Znf_C2H2_jaz"/>
</dbReference>
<dbReference type="InterPro" id="IPR036236">
    <property type="entry name" value="Znf_C2H2_sf"/>
</dbReference>
<dbReference type="PANTHER" id="PTHR13278">
    <property type="entry name" value="ZINC FINGER PROTEIN 830"/>
    <property type="match status" value="1"/>
</dbReference>
<dbReference type="PANTHER" id="PTHR13278:SF0">
    <property type="entry name" value="ZINC FINGER PROTEIN 830"/>
    <property type="match status" value="1"/>
</dbReference>
<dbReference type="Pfam" id="PF12171">
    <property type="entry name" value="zf-C2H2_jaz"/>
    <property type="match status" value="1"/>
</dbReference>
<dbReference type="Pfam" id="PF23406">
    <property type="entry name" value="ZNF380_CC"/>
    <property type="match status" value="1"/>
</dbReference>
<dbReference type="SMART" id="SM00451">
    <property type="entry name" value="ZnF_U1"/>
    <property type="match status" value="1"/>
</dbReference>
<dbReference type="SUPFAM" id="SSF57667">
    <property type="entry name" value="beta-beta-alpha zinc fingers"/>
    <property type="match status" value="1"/>
</dbReference>
<dbReference type="PROSITE" id="PS00028">
    <property type="entry name" value="ZINC_FINGER_C2H2_1"/>
    <property type="match status" value="1"/>
</dbReference>
<feature type="chain" id="PRO_0000076196" description="Zinc finger protein 830">
    <location>
        <begin position="1"/>
        <end position="326"/>
    </location>
</feature>
<feature type="zinc finger region" description="C2H2-type">
    <location>
        <begin position="50"/>
        <end position="72"/>
    </location>
</feature>
<feature type="region of interest" description="Disordered" evidence="4">
    <location>
        <begin position="1"/>
        <end position="37"/>
    </location>
</feature>
<feature type="region of interest" description="Disordered" evidence="4">
    <location>
        <begin position="83"/>
        <end position="214"/>
    </location>
</feature>
<feature type="region of interest" description="Disordered" evidence="4">
    <location>
        <begin position="237"/>
        <end position="257"/>
    </location>
</feature>
<feature type="region of interest" description="Disordered" evidence="4">
    <location>
        <begin position="276"/>
        <end position="309"/>
    </location>
</feature>
<feature type="coiled-coil region" evidence="3">
    <location>
        <begin position="224"/>
        <end position="295"/>
    </location>
</feature>
<feature type="compositionally biased region" description="Basic residues" evidence="4">
    <location>
        <begin position="1"/>
        <end position="11"/>
    </location>
</feature>
<feature type="compositionally biased region" description="Basic and acidic residues" evidence="4">
    <location>
        <begin position="13"/>
        <end position="36"/>
    </location>
</feature>
<feature type="compositionally biased region" description="Low complexity" evidence="4">
    <location>
        <begin position="83"/>
        <end position="108"/>
    </location>
</feature>
<feature type="compositionally biased region" description="Polar residues" evidence="4">
    <location>
        <begin position="180"/>
        <end position="195"/>
    </location>
</feature>
<feature type="compositionally biased region" description="Basic and acidic residues" evidence="4">
    <location>
        <begin position="276"/>
        <end position="286"/>
    </location>
</feature>
<feature type="compositionally biased region" description="Acidic residues" evidence="4">
    <location>
        <begin position="298"/>
        <end position="309"/>
    </location>
</feature>
<evidence type="ECO:0000250" key="1">
    <source>
        <dbReference type="UniProtKB" id="Q8R1N0"/>
    </source>
</evidence>
<evidence type="ECO:0000250" key="2">
    <source>
        <dbReference type="UniProtKB" id="Q96NB3"/>
    </source>
</evidence>
<evidence type="ECO:0000255" key="3"/>
<evidence type="ECO:0000256" key="4">
    <source>
        <dbReference type="SAM" id="MobiDB-lite"/>
    </source>
</evidence>